<dbReference type="EC" id="2.3.2.27" evidence="3"/>
<dbReference type="EMBL" id="CR861046">
    <property type="protein sequence ID" value="CAH93134.1"/>
    <property type="molecule type" value="mRNA"/>
</dbReference>
<dbReference type="RefSeq" id="NP_001126854.1">
    <property type="nucleotide sequence ID" value="NM_001133382.1"/>
</dbReference>
<dbReference type="SMR" id="Q5R532"/>
<dbReference type="FunCoup" id="Q5R532">
    <property type="interactions" value="2394"/>
</dbReference>
<dbReference type="STRING" id="9601.ENSPPYP00000016233"/>
<dbReference type="GeneID" id="100173862"/>
<dbReference type="KEGG" id="pon:100173862"/>
<dbReference type="CTD" id="10296"/>
<dbReference type="eggNOG" id="KOG0396">
    <property type="taxonomic scope" value="Eukaryota"/>
</dbReference>
<dbReference type="InParanoid" id="Q5R532"/>
<dbReference type="OrthoDB" id="1933455at2759"/>
<dbReference type="Proteomes" id="UP000001595">
    <property type="component" value="Unplaced"/>
</dbReference>
<dbReference type="GO" id="GO:0005737">
    <property type="term" value="C:cytoplasm"/>
    <property type="evidence" value="ECO:0007669"/>
    <property type="project" value="UniProtKB-SubCell"/>
</dbReference>
<dbReference type="GO" id="GO:0005856">
    <property type="term" value="C:cytoskeleton"/>
    <property type="evidence" value="ECO:0007669"/>
    <property type="project" value="UniProtKB-SubCell"/>
</dbReference>
<dbReference type="GO" id="GO:0034657">
    <property type="term" value="C:GID complex"/>
    <property type="evidence" value="ECO:0007669"/>
    <property type="project" value="TreeGrafter"/>
</dbReference>
<dbReference type="GO" id="GO:0016363">
    <property type="term" value="C:nuclear matrix"/>
    <property type="evidence" value="ECO:0007669"/>
    <property type="project" value="UniProtKB-SubCell"/>
</dbReference>
<dbReference type="GO" id="GO:0005654">
    <property type="term" value="C:nucleoplasm"/>
    <property type="evidence" value="ECO:0000250"/>
    <property type="project" value="UniProtKB"/>
</dbReference>
<dbReference type="GO" id="GO:0005886">
    <property type="term" value="C:plasma membrane"/>
    <property type="evidence" value="ECO:0007669"/>
    <property type="project" value="UniProtKB-SubCell"/>
</dbReference>
<dbReference type="GO" id="GO:0003779">
    <property type="term" value="F:actin binding"/>
    <property type="evidence" value="ECO:0007669"/>
    <property type="project" value="UniProtKB-KW"/>
</dbReference>
<dbReference type="GO" id="GO:0061630">
    <property type="term" value="F:ubiquitin protein ligase activity"/>
    <property type="evidence" value="ECO:0007669"/>
    <property type="project" value="InterPro"/>
</dbReference>
<dbReference type="GO" id="GO:0008270">
    <property type="term" value="F:zinc ion binding"/>
    <property type="evidence" value="ECO:0007669"/>
    <property type="project" value="UniProtKB-KW"/>
</dbReference>
<dbReference type="GO" id="GO:0051301">
    <property type="term" value="P:cell division"/>
    <property type="evidence" value="ECO:0007669"/>
    <property type="project" value="UniProtKB-KW"/>
</dbReference>
<dbReference type="GO" id="GO:0043249">
    <property type="term" value="P:erythrocyte maturation"/>
    <property type="evidence" value="ECO:0007669"/>
    <property type="project" value="UniProtKB-KW"/>
</dbReference>
<dbReference type="GO" id="GO:0043161">
    <property type="term" value="P:proteasome-mediated ubiquitin-dependent protein catabolic process"/>
    <property type="evidence" value="ECO:0007669"/>
    <property type="project" value="InterPro"/>
</dbReference>
<dbReference type="CDD" id="cd16659">
    <property type="entry name" value="RING-Ubox_Emp"/>
    <property type="match status" value="1"/>
</dbReference>
<dbReference type="InterPro" id="IPR013144">
    <property type="entry name" value="CRA_dom"/>
</dbReference>
<dbReference type="InterPro" id="IPR024964">
    <property type="entry name" value="CTLH/CRA"/>
</dbReference>
<dbReference type="InterPro" id="IPR006595">
    <property type="entry name" value="CTLH_C"/>
</dbReference>
<dbReference type="InterPro" id="IPR045098">
    <property type="entry name" value="Fyv10_fam"/>
</dbReference>
<dbReference type="InterPro" id="IPR006594">
    <property type="entry name" value="LisH"/>
</dbReference>
<dbReference type="InterPro" id="IPR044063">
    <property type="entry name" value="ZF_RING_GID"/>
</dbReference>
<dbReference type="PANTHER" id="PTHR12170:SF2">
    <property type="entry name" value="E3 UBIQUITIN-PROTEIN TRANSFERASE MAEA"/>
    <property type="match status" value="1"/>
</dbReference>
<dbReference type="PANTHER" id="PTHR12170">
    <property type="entry name" value="MACROPHAGE ERYTHROBLAST ATTACHER-RELATED"/>
    <property type="match status" value="1"/>
</dbReference>
<dbReference type="Pfam" id="PF10607">
    <property type="entry name" value="CTLH"/>
    <property type="match status" value="1"/>
</dbReference>
<dbReference type="SMART" id="SM00757">
    <property type="entry name" value="CRA"/>
    <property type="match status" value="1"/>
</dbReference>
<dbReference type="SMART" id="SM00668">
    <property type="entry name" value="CTLH"/>
    <property type="match status" value="1"/>
</dbReference>
<dbReference type="SMART" id="SM00667">
    <property type="entry name" value="LisH"/>
    <property type="match status" value="1"/>
</dbReference>
<dbReference type="SUPFAM" id="SSF57850">
    <property type="entry name" value="RING/U-box"/>
    <property type="match status" value="1"/>
</dbReference>
<dbReference type="PROSITE" id="PS50897">
    <property type="entry name" value="CTLH"/>
    <property type="match status" value="1"/>
</dbReference>
<dbReference type="PROSITE" id="PS50896">
    <property type="entry name" value="LISH"/>
    <property type="match status" value="1"/>
</dbReference>
<dbReference type="PROSITE" id="PS51867">
    <property type="entry name" value="ZF_RING_GID"/>
    <property type="match status" value="1"/>
</dbReference>
<comment type="function">
    <text evidence="2 3">Core component of the CTLH E3 ubiquitin-protein ligase complex that selectively accepts ubiquitin from UBE2H and mediates ubiquitination and subsequent proteasomal degradation of the transcription factor HBP1. MAEA and RMND5A are both required for catalytic activity of the CTLH E3 ubiquitin-protein ligase complex. MAEA is required for normal cell proliferation. The CTLH E3 ubiquitin-protein ligase complex is not required for the degradation of enzymes involved in gluconeogenesis, such as FBP1 (By similarity). Plays a role in erythroblast enucleation during erythrocyte maturation and in the development of mature macrophages (By similarity). Mediates the attachment of erythroid cell to mature macrophages; this MAEA-mediated contact inhibits erythroid cell apoptosis (By similarity). Participates in erythroblastic island formation, which is the functional unit of definitive erythropoiesis. Associates with F-actin to regulate actin distribution in erythroblasts and macrophages (By similarity). May contribute to nuclear architecture and cells division events (By similarity).</text>
</comment>
<comment type="catalytic activity">
    <reaction evidence="3">
        <text>S-ubiquitinyl-[E2 ubiquitin-conjugating enzyme]-L-cysteine + [acceptor protein]-L-lysine = [E2 ubiquitin-conjugating enzyme]-L-cysteine + N(6)-ubiquitinyl-[acceptor protein]-L-lysine.</text>
        <dbReference type="EC" id="2.3.2.27"/>
    </reaction>
</comment>
<comment type="subunit">
    <text evidence="3">Identified in the CTLH complex that contains GID4, RANBP9 and/or RANBP10, MKLN1, MAEA, RMND5A (or alternatively its paralog RMND5B), GID8, ARMC8, WDR26 and YPEL5. Within this complex, MAEA, RMND5A (or alternatively its paralog RMND5B), GID8, WDR26, and RANBP9 and/or RANBP10 form the catalytic core, while GID4, MKLN1, ARMC8 and YPEL5 have ancillary roles. Interacts with F-actin.</text>
</comment>
<comment type="subcellular location">
    <subcellularLocation>
        <location evidence="2">Cytoplasm</location>
    </subcellularLocation>
    <subcellularLocation>
        <location evidence="3">Nucleus</location>
        <location evidence="3">Nucleoplasm</location>
    </subcellularLocation>
    <subcellularLocation>
        <location evidence="2">Nucleus matrix</location>
    </subcellularLocation>
    <subcellularLocation>
        <location evidence="2">Cell membrane</location>
    </subcellularLocation>
    <subcellularLocation>
        <location evidence="2">Cytoplasm</location>
        <location evidence="2">Cytoskeleton</location>
    </subcellularLocation>
    <text evidence="2 3">Detected in a nuclear, speckled-like pattern (By similarity). Localized with condensed chromatin at prophase; Detected in nuclear spindle poles at metaphase and in the contractile ring during telophase and cytokinesis (By similarity). Present in cytoplasm, nuclear matrix and at the cell surface in macrophages; predominantly nuclear in immature macrophages and predominantly detected at the cell surface in mature macrophages. Colocalizes with F-actin in macrophages (By similarity).</text>
</comment>
<comment type="domain">
    <text evidence="3">The expected RING-type zinc finger domain is highly divergent and most of the expected Cys residues are not conserved. Still, the protein is required for CTLH complex E3 ubiquitin-protein transferase activity. In addition, the conserved Cys-314 in this highly divergent region is required for ubiquitination by the yeast GID complex, suggesting a direct role in catalyzing ubiquitination.</text>
</comment>
<comment type="PTM">
    <text evidence="3">Autoubiquitinated as component of the CTLH E3 ubiquitin-protein ligase complex (in vitro).</text>
</comment>
<proteinExistence type="evidence at transcript level"/>
<organism>
    <name type="scientific">Pongo abelii</name>
    <name type="common">Sumatran orangutan</name>
    <name type="synonym">Pongo pygmaeus abelii</name>
    <dbReference type="NCBI Taxonomy" id="9601"/>
    <lineage>
        <taxon>Eukaryota</taxon>
        <taxon>Metazoa</taxon>
        <taxon>Chordata</taxon>
        <taxon>Craniata</taxon>
        <taxon>Vertebrata</taxon>
        <taxon>Euteleostomi</taxon>
        <taxon>Mammalia</taxon>
        <taxon>Eutheria</taxon>
        <taxon>Euarchontoglires</taxon>
        <taxon>Primates</taxon>
        <taxon>Haplorrhini</taxon>
        <taxon>Catarrhini</taxon>
        <taxon>Hominidae</taxon>
        <taxon>Pongo</taxon>
    </lineage>
</organism>
<name>MAEA_PONAB</name>
<keyword id="KW-0009">Actin-binding</keyword>
<keyword id="KW-0131">Cell cycle</keyword>
<keyword id="KW-0132">Cell division</keyword>
<keyword id="KW-1003">Cell membrane</keyword>
<keyword id="KW-0963">Cytoplasm</keyword>
<keyword id="KW-0206">Cytoskeleton</keyword>
<keyword id="KW-0265">Erythrocyte maturation</keyword>
<keyword id="KW-0472">Membrane</keyword>
<keyword id="KW-0479">Metal-binding</keyword>
<keyword id="KW-0539">Nucleus</keyword>
<keyword id="KW-0597">Phosphoprotein</keyword>
<keyword id="KW-1185">Reference proteome</keyword>
<keyword id="KW-0808">Transferase</keyword>
<keyword id="KW-0832">Ubl conjugation</keyword>
<keyword id="KW-0833">Ubl conjugation pathway</keyword>
<keyword id="KW-0862">Zinc</keyword>
<keyword id="KW-0863">Zinc-finger</keyword>
<accession>Q5R532</accession>
<sequence length="396" mass="45287">MAVQESAAQLSMTLKVQEYPTLKVPYETLNKRFRAAQKNIDRETSHVTMVVAELEKTLSGCPAVDSVVSLLDGVVEKLSVLKRKAVESIQAEDESAKLCKRRIEHLKEHSSDQPAAASVWKRKRMDRMMVEHLLRCGYYNTAVKLARQSGIEDLVNIEMFLTAKEVEESLERRETATCLAWCHDNKSRLRKMKSCLEFSLRIQEFIELIRQNKRLDAVRHARKHFSQAEGSQLDEVRQAMGMLAFPPDTHISPYKDLLDPARWRMLIQQFRYDNYRLHQLGNNSVFTLTLQAGLSAIKTPQCYKEDGSSKSPDCPVCSRSLNKLAQPLPMAHCANSRLVCKISGDVMNENNPPMMLPNGYVYGYNSLLSIRQDDKVVCPRTKEVFHFSQAEKVYIM</sequence>
<evidence type="ECO:0000250" key="1">
    <source>
        <dbReference type="UniProtKB" id="P40492"/>
    </source>
</evidence>
<evidence type="ECO:0000250" key="2">
    <source>
        <dbReference type="UniProtKB" id="Q4VC33"/>
    </source>
</evidence>
<evidence type="ECO:0000250" key="3">
    <source>
        <dbReference type="UniProtKB" id="Q7L5Y9"/>
    </source>
</evidence>
<evidence type="ECO:0000255" key="4">
    <source>
        <dbReference type="PROSITE-ProRule" id="PRU00058"/>
    </source>
</evidence>
<evidence type="ECO:0000255" key="5">
    <source>
        <dbReference type="PROSITE-ProRule" id="PRU00126"/>
    </source>
</evidence>
<evidence type="ECO:0000255" key="6">
    <source>
        <dbReference type="PROSITE-ProRule" id="PRU01215"/>
    </source>
</evidence>
<reference key="1">
    <citation type="submission" date="2004-11" db="EMBL/GenBank/DDBJ databases">
        <authorList>
            <consortium name="The German cDNA consortium"/>
        </authorList>
    </citation>
    <scope>NUCLEOTIDE SEQUENCE [LARGE SCALE MRNA]</scope>
    <source>
        <tissue>Brain cortex</tissue>
    </source>
</reference>
<gene>
    <name type="primary">MAEA</name>
</gene>
<feature type="chain" id="PRO_0000284939" description="E3 ubiquitin-protein transferase MAEA">
    <location>
        <begin position="1"/>
        <end position="396"/>
    </location>
</feature>
<feature type="domain" description="LisH" evidence="5">
    <location>
        <begin position="121"/>
        <end position="153"/>
    </location>
</feature>
<feature type="domain" description="CTLH" evidence="4">
    <location>
        <begin position="159"/>
        <end position="216"/>
    </location>
</feature>
<feature type="zinc finger region" description="RING-Gid-type" evidence="6">
    <location>
        <begin position="314"/>
        <end position="381"/>
    </location>
</feature>
<feature type="region of interest" description="Extracellular and involved in cell to cell contact" evidence="3">
    <location>
        <begin position="1"/>
        <end position="124"/>
    </location>
</feature>
<feature type="site" description="Essential for ubiquitin ligase activity" evidence="1">
    <location>
        <position position="314"/>
    </location>
</feature>
<feature type="modified residue" description="Phosphothreonine" evidence="3">
    <location>
        <position position="28"/>
    </location>
</feature>
<protein>
    <recommendedName>
        <fullName>E3 ubiquitin-protein transferase MAEA</fullName>
        <ecNumber evidence="3">2.3.2.27</ecNumber>
    </recommendedName>
    <alternativeName>
        <fullName>Macrophage erythroblast attacher</fullName>
    </alternativeName>
</protein>